<keyword id="KW-0010">Activator</keyword>
<keyword id="KW-0963">Cytoplasm</keyword>
<keyword id="KW-0238">DNA-binding</keyword>
<keyword id="KW-0804">Transcription</keyword>
<keyword id="KW-0805">Transcription regulation</keyword>
<proteinExistence type="inferred from homology"/>
<dbReference type="EMBL" id="X63149">
    <property type="protein sequence ID" value="CAA44851.1"/>
    <property type="molecule type" value="Genomic_DNA"/>
</dbReference>
<dbReference type="PIR" id="A48899">
    <property type="entry name" value="A48899"/>
</dbReference>
<dbReference type="SMR" id="P45461"/>
<dbReference type="GO" id="GO:0005737">
    <property type="term" value="C:cytoplasm"/>
    <property type="evidence" value="ECO:0007669"/>
    <property type="project" value="UniProtKB-SubCell"/>
</dbReference>
<dbReference type="GO" id="GO:0003700">
    <property type="term" value="F:DNA-binding transcription factor activity"/>
    <property type="evidence" value="ECO:0007669"/>
    <property type="project" value="InterPro"/>
</dbReference>
<dbReference type="GO" id="GO:0043565">
    <property type="term" value="F:sequence-specific DNA binding"/>
    <property type="evidence" value="ECO:0007669"/>
    <property type="project" value="TreeGrafter"/>
</dbReference>
<dbReference type="GO" id="GO:0006351">
    <property type="term" value="P:DNA-templated transcription"/>
    <property type="evidence" value="ECO:0007669"/>
    <property type="project" value="TreeGrafter"/>
</dbReference>
<dbReference type="FunFam" id="1.10.10.10:FF:000038">
    <property type="entry name" value="Glycine cleavage system transcriptional activator"/>
    <property type="match status" value="1"/>
</dbReference>
<dbReference type="Gene3D" id="3.40.190.10">
    <property type="entry name" value="Periplasmic binding protein-like II"/>
    <property type="match status" value="2"/>
</dbReference>
<dbReference type="Gene3D" id="1.10.10.10">
    <property type="entry name" value="Winged helix-like DNA-binding domain superfamily/Winged helix DNA-binding domain"/>
    <property type="match status" value="1"/>
</dbReference>
<dbReference type="InterPro" id="IPR005119">
    <property type="entry name" value="LysR_subst-bd"/>
</dbReference>
<dbReference type="InterPro" id="IPR000847">
    <property type="entry name" value="Tscrpt_reg_HTH_LysR"/>
</dbReference>
<dbReference type="InterPro" id="IPR036388">
    <property type="entry name" value="WH-like_DNA-bd_sf"/>
</dbReference>
<dbReference type="InterPro" id="IPR036390">
    <property type="entry name" value="WH_DNA-bd_sf"/>
</dbReference>
<dbReference type="PANTHER" id="PTHR30537:SF70">
    <property type="entry name" value="HTH-TYPE TRANSCRIPTIONAL ACTIVATOR AMPR"/>
    <property type="match status" value="1"/>
</dbReference>
<dbReference type="PANTHER" id="PTHR30537">
    <property type="entry name" value="HTH-TYPE TRANSCRIPTIONAL REGULATOR"/>
    <property type="match status" value="1"/>
</dbReference>
<dbReference type="Pfam" id="PF00126">
    <property type="entry name" value="HTH_1"/>
    <property type="match status" value="1"/>
</dbReference>
<dbReference type="Pfam" id="PF03466">
    <property type="entry name" value="LysR_substrate"/>
    <property type="match status" value="1"/>
</dbReference>
<dbReference type="PRINTS" id="PR00039">
    <property type="entry name" value="HTHLYSR"/>
</dbReference>
<dbReference type="SUPFAM" id="SSF53850">
    <property type="entry name" value="Periplasmic binding protein-like II"/>
    <property type="match status" value="1"/>
</dbReference>
<dbReference type="SUPFAM" id="SSF46785">
    <property type="entry name" value="Winged helix' DNA-binding domain"/>
    <property type="match status" value="1"/>
</dbReference>
<dbReference type="PROSITE" id="PS50931">
    <property type="entry name" value="HTH_LYSR"/>
    <property type="match status" value="1"/>
</dbReference>
<protein>
    <recommendedName>
        <fullName>HTH-type transcriptional activator AmpR</fullName>
    </recommendedName>
</protein>
<gene>
    <name type="primary">ampR</name>
</gene>
<name>AMPR_YEREN</name>
<feature type="chain" id="PRO_0000105591" description="HTH-type transcriptional activator AmpR">
    <location>
        <begin position="1"/>
        <end position="294"/>
    </location>
</feature>
<feature type="domain" description="HTH lysR-type" evidence="1">
    <location>
        <begin position="6"/>
        <end position="63"/>
    </location>
</feature>
<feature type="DNA-binding region" description="H-T-H motif" evidence="1">
    <location>
        <begin position="23"/>
        <end position="42"/>
    </location>
</feature>
<accession>P45461</accession>
<sequence>MVRSYIPLNSLRAFEAAARQLSFTKAAIELNVTHAAISQQVKALEQRLNCRLFIRISRGLVLTTEGENLLPILNDSFDRIADTLDRFSTGIIREKVRVGVVGTFATGYLLSRLRDFQQHSPHVDILLSTHNNRVDVVAEGLDYAIRYGNGALAWHESHFMYAPPLAQLCAPSISKRFTPPTDLQRFMLLGSYRAMNWSAWFAAAGGSVPSPSQQIMMFDSSVSMLEAAQAEIGIALAPPAMFMHLLRSERIIQPFSTTVSLGGYWLTRLQSRTETPAMRDFALWLLSEMKSEGE</sequence>
<organism>
    <name type="scientific">Yersinia enterocolitica</name>
    <dbReference type="NCBI Taxonomy" id="630"/>
    <lineage>
        <taxon>Bacteria</taxon>
        <taxon>Pseudomonadati</taxon>
        <taxon>Pseudomonadota</taxon>
        <taxon>Gammaproteobacteria</taxon>
        <taxon>Enterobacterales</taxon>
        <taxon>Yersiniaceae</taxon>
        <taxon>Yersinia</taxon>
    </lineage>
</organism>
<evidence type="ECO:0000255" key="1">
    <source>
        <dbReference type="PROSITE-ProRule" id="PRU00253"/>
    </source>
</evidence>
<evidence type="ECO:0000305" key="2"/>
<comment type="function">
    <text>This protein is a positive regulator of gene expression of beta-lactamase (AmpC).</text>
</comment>
<comment type="subcellular location">
    <subcellularLocation>
        <location>Cytoplasm</location>
    </subcellularLocation>
</comment>
<comment type="similarity">
    <text evidence="2">Belongs to the LysR transcriptional regulatory family.</text>
</comment>
<reference key="1">
    <citation type="journal article" date="1992" name="Antimicrob. Agents Chemother.">
        <title>Nucleotide sequence of the ampC-ampR region from the chromosome of Yersinia enterocolitica.</title>
        <authorList>
            <person name="Seoane A."/>
            <person name="Francia M.V."/>
            <person name="Garcia Lobo J.M."/>
        </authorList>
    </citation>
    <scope>NUCLEOTIDE SEQUENCE [GENOMIC DNA]</scope>
    <source>
        <strain>IP97 / Serotype O:5B</strain>
    </source>
</reference>